<dbReference type="EMBL" id="CP000250">
    <property type="protein sequence ID" value="ABD07741.1"/>
    <property type="molecule type" value="Genomic_DNA"/>
</dbReference>
<dbReference type="RefSeq" id="WP_011441925.1">
    <property type="nucleotide sequence ID" value="NC_007778.1"/>
</dbReference>
<dbReference type="SMR" id="Q2IVL9"/>
<dbReference type="STRING" id="316058.RPB_3039"/>
<dbReference type="KEGG" id="rpb:RPB_3039"/>
<dbReference type="eggNOG" id="COG0864">
    <property type="taxonomic scope" value="Bacteria"/>
</dbReference>
<dbReference type="HOGENOM" id="CLU_113319_1_4_5"/>
<dbReference type="OrthoDB" id="9806294at2"/>
<dbReference type="Proteomes" id="UP000008809">
    <property type="component" value="Chromosome"/>
</dbReference>
<dbReference type="GO" id="GO:0003677">
    <property type="term" value="F:DNA binding"/>
    <property type="evidence" value="ECO:0007669"/>
    <property type="project" value="UniProtKB-KW"/>
</dbReference>
<dbReference type="GO" id="GO:0003700">
    <property type="term" value="F:DNA-binding transcription factor activity"/>
    <property type="evidence" value="ECO:0007669"/>
    <property type="project" value="UniProtKB-UniRule"/>
</dbReference>
<dbReference type="GO" id="GO:0016151">
    <property type="term" value="F:nickel cation binding"/>
    <property type="evidence" value="ECO:0007669"/>
    <property type="project" value="UniProtKB-UniRule"/>
</dbReference>
<dbReference type="GO" id="GO:0010045">
    <property type="term" value="P:response to nickel cation"/>
    <property type="evidence" value="ECO:0007669"/>
    <property type="project" value="InterPro"/>
</dbReference>
<dbReference type="CDD" id="cd22231">
    <property type="entry name" value="RHH_NikR_HicB-like"/>
    <property type="match status" value="1"/>
</dbReference>
<dbReference type="Gene3D" id="3.30.70.1150">
    <property type="entry name" value="ACT-like. Chain A, domain 2"/>
    <property type="match status" value="1"/>
</dbReference>
<dbReference type="Gene3D" id="1.10.1220.10">
    <property type="entry name" value="Met repressor-like"/>
    <property type="match status" value="1"/>
</dbReference>
<dbReference type="HAMAP" id="MF_00476">
    <property type="entry name" value="NikR"/>
    <property type="match status" value="1"/>
</dbReference>
<dbReference type="InterPro" id="IPR027271">
    <property type="entry name" value="Acetolactate_synth/TF_NikR_C"/>
</dbReference>
<dbReference type="InterPro" id="IPR045865">
    <property type="entry name" value="ACT-like_dom_sf"/>
</dbReference>
<dbReference type="InterPro" id="IPR013321">
    <property type="entry name" value="Arc_rbn_hlx_hlx"/>
</dbReference>
<dbReference type="InterPro" id="IPR002145">
    <property type="entry name" value="CopG"/>
</dbReference>
<dbReference type="InterPro" id="IPR050192">
    <property type="entry name" value="CopG/NikR_regulator"/>
</dbReference>
<dbReference type="InterPro" id="IPR022988">
    <property type="entry name" value="Ni_resp_reg_NikR"/>
</dbReference>
<dbReference type="InterPro" id="IPR014160">
    <property type="entry name" value="Nickel_NikR_proteobac"/>
</dbReference>
<dbReference type="InterPro" id="IPR010985">
    <property type="entry name" value="Ribbon_hlx_hlx"/>
</dbReference>
<dbReference type="InterPro" id="IPR014864">
    <property type="entry name" value="TF_NikR_Ni-bd_C"/>
</dbReference>
<dbReference type="NCBIfam" id="TIGR02793">
    <property type="entry name" value="nikR"/>
    <property type="match status" value="1"/>
</dbReference>
<dbReference type="NCBIfam" id="NF002815">
    <property type="entry name" value="PRK02967.1"/>
    <property type="match status" value="1"/>
</dbReference>
<dbReference type="NCBIfam" id="NF003381">
    <property type="entry name" value="PRK04460.1"/>
    <property type="match status" value="1"/>
</dbReference>
<dbReference type="PANTHER" id="PTHR34719">
    <property type="entry name" value="NICKEL-RESPONSIVE REGULATOR"/>
    <property type="match status" value="1"/>
</dbReference>
<dbReference type="PANTHER" id="PTHR34719:SF2">
    <property type="entry name" value="NICKEL-RESPONSIVE REGULATOR"/>
    <property type="match status" value="1"/>
</dbReference>
<dbReference type="Pfam" id="PF08753">
    <property type="entry name" value="NikR_C"/>
    <property type="match status" value="1"/>
</dbReference>
<dbReference type="Pfam" id="PF01402">
    <property type="entry name" value="RHH_1"/>
    <property type="match status" value="1"/>
</dbReference>
<dbReference type="SUPFAM" id="SSF55021">
    <property type="entry name" value="ACT-like"/>
    <property type="match status" value="1"/>
</dbReference>
<dbReference type="SUPFAM" id="SSF47598">
    <property type="entry name" value="Ribbon-helix-helix"/>
    <property type="match status" value="1"/>
</dbReference>
<gene>
    <name type="ordered locus">RPB_3039</name>
</gene>
<sequence>MHRVTVTLDDDLMKKLDAIIEARGYQNRSEAIRDLARIGIQQTSAHASAEHCVGAMVYTYDHSKRDLPRKLTQSFHNHHELSRATMHVHLDHDQCLEVTILDGKANEIQHFADHIFSERGVRYGRLVTIPTSGDGHAHD</sequence>
<keyword id="KW-0238">DNA-binding</keyword>
<keyword id="KW-0479">Metal-binding</keyword>
<keyword id="KW-0533">Nickel</keyword>
<keyword id="KW-1185">Reference proteome</keyword>
<keyword id="KW-0804">Transcription</keyword>
<keyword id="KW-0805">Transcription regulation</keyword>
<comment type="function">
    <text evidence="1">Transcriptional regulator.</text>
</comment>
<comment type="cofactor">
    <cofactor evidence="1">
        <name>Ni(2+)</name>
        <dbReference type="ChEBI" id="CHEBI:49786"/>
    </cofactor>
    <text evidence="1">Binds 1 nickel ion per subunit.</text>
</comment>
<comment type="similarity">
    <text evidence="1">Belongs to the transcriptional regulatory CopG/NikR family.</text>
</comment>
<protein>
    <recommendedName>
        <fullName evidence="1">Putative nickel-responsive regulator</fullName>
    </recommendedName>
</protein>
<organism>
    <name type="scientific">Rhodopseudomonas palustris (strain HaA2)</name>
    <dbReference type="NCBI Taxonomy" id="316058"/>
    <lineage>
        <taxon>Bacteria</taxon>
        <taxon>Pseudomonadati</taxon>
        <taxon>Pseudomonadota</taxon>
        <taxon>Alphaproteobacteria</taxon>
        <taxon>Hyphomicrobiales</taxon>
        <taxon>Nitrobacteraceae</taxon>
        <taxon>Rhodopseudomonas</taxon>
    </lineage>
</organism>
<name>NIKR_RHOP2</name>
<accession>Q2IVL9</accession>
<proteinExistence type="inferred from homology"/>
<feature type="chain" id="PRO_1000125835" description="Putative nickel-responsive regulator">
    <location>
        <begin position="1"/>
        <end position="139"/>
    </location>
</feature>
<feature type="binding site" evidence="1">
    <location>
        <position position="76"/>
    </location>
    <ligand>
        <name>Ni(2+)</name>
        <dbReference type="ChEBI" id="CHEBI:49786"/>
    </ligand>
</feature>
<feature type="binding site" evidence="1">
    <location>
        <position position="87"/>
    </location>
    <ligand>
        <name>Ni(2+)</name>
        <dbReference type="ChEBI" id="CHEBI:49786"/>
    </ligand>
</feature>
<feature type="binding site" evidence="1">
    <location>
        <position position="89"/>
    </location>
    <ligand>
        <name>Ni(2+)</name>
        <dbReference type="ChEBI" id="CHEBI:49786"/>
    </ligand>
</feature>
<feature type="binding site" evidence="1">
    <location>
        <position position="95"/>
    </location>
    <ligand>
        <name>Ni(2+)</name>
        <dbReference type="ChEBI" id="CHEBI:49786"/>
    </ligand>
</feature>
<reference key="1">
    <citation type="submission" date="2006-01" db="EMBL/GenBank/DDBJ databases">
        <title>Complete sequence of Rhodopseudomonas palustris HaA2.</title>
        <authorList>
            <consortium name="US DOE Joint Genome Institute"/>
            <person name="Copeland A."/>
            <person name="Lucas S."/>
            <person name="Lapidus A."/>
            <person name="Barry K."/>
            <person name="Detter J.C."/>
            <person name="Glavina T."/>
            <person name="Hammon N."/>
            <person name="Israni S."/>
            <person name="Pitluck S."/>
            <person name="Chain P."/>
            <person name="Malfatti S."/>
            <person name="Shin M."/>
            <person name="Vergez L."/>
            <person name="Schmutz J."/>
            <person name="Larimer F."/>
            <person name="Land M."/>
            <person name="Hauser L."/>
            <person name="Pelletier D.A."/>
            <person name="Kyrpides N."/>
            <person name="Anderson I."/>
            <person name="Oda Y."/>
            <person name="Harwood C.S."/>
            <person name="Richardson P."/>
        </authorList>
    </citation>
    <scope>NUCLEOTIDE SEQUENCE [LARGE SCALE GENOMIC DNA]</scope>
    <source>
        <strain>HaA2</strain>
    </source>
</reference>
<evidence type="ECO:0000255" key="1">
    <source>
        <dbReference type="HAMAP-Rule" id="MF_00476"/>
    </source>
</evidence>